<dbReference type="EMBL" id="CP001127">
    <property type="protein sequence ID" value="ACF90967.1"/>
    <property type="molecule type" value="Genomic_DNA"/>
</dbReference>
<dbReference type="RefSeq" id="WP_000358956.1">
    <property type="nucleotide sequence ID" value="NC_011094.1"/>
</dbReference>
<dbReference type="SMR" id="B4TXC6"/>
<dbReference type="GeneID" id="93035747"/>
<dbReference type="KEGG" id="sew:SeSA_A3620"/>
<dbReference type="HOGENOM" id="CLU_098841_0_1_6"/>
<dbReference type="Proteomes" id="UP000001865">
    <property type="component" value="Chromosome"/>
</dbReference>
<dbReference type="GO" id="GO:0022625">
    <property type="term" value="C:cytosolic large ribosomal subunit"/>
    <property type="evidence" value="ECO:0007669"/>
    <property type="project" value="TreeGrafter"/>
</dbReference>
<dbReference type="GO" id="GO:0008097">
    <property type="term" value="F:5S rRNA binding"/>
    <property type="evidence" value="ECO:0007669"/>
    <property type="project" value="TreeGrafter"/>
</dbReference>
<dbReference type="GO" id="GO:0003735">
    <property type="term" value="F:structural constituent of ribosome"/>
    <property type="evidence" value="ECO:0007669"/>
    <property type="project" value="InterPro"/>
</dbReference>
<dbReference type="GO" id="GO:0006412">
    <property type="term" value="P:translation"/>
    <property type="evidence" value="ECO:0007669"/>
    <property type="project" value="UniProtKB-UniRule"/>
</dbReference>
<dbReference type="CDD" id="cd00432">
    <property type="entry name" value="Ribosomal_L18_L5e"/>
    <property type="match status" value="1"/>
</dbReference>
<dbReference type="FunFam" id="3.30.420.100:FF:000001">
    <property type="entry name" value="50S ribosomal protein L18"/>
    <property type="match status" value="1"/>
</dbReference>
<dbReference type="Gene3D" id="3.30.420.100">
    <property type="match status" value="1"/>
</dbReference>
<dbReference type="HAMAP" id="MF_01337_B">
    <property type="entry name" value="Ribosomal_uL18_B"/>
    <property type="match status" value="1"/>
</dbReference>
<dbReference type="InterPro" id="IPR004389">
    <property type="entry name" value="Ribosomal_uL18_bac-type"/>
</dbReference>
<dbReference type="InterPro" id="IPR005484">
    <property type="entry name" value="Ribosomal_uL18_bac/euk"/>
</dbReference>
<dbReference type="NCBIfam" id="TIGR00060">
    <property type="entry name" value="L18_bact"/>
    <property type="match status" value="1"/>
</dbReference>
<dbReference type="PANTHER" id="PTHR12899">
    <property type="entry name" value="39S RIBOSOMAL PROTEIN L18, MITOCHONDRIAL"/>
    <property type="match status" value="1"/>
</dbReference>
<dbReference type="PANTHER" id="PTHR12899:SF3">
    <property type="entry name" value="LARGE RIBOSOMAL SUBUNIT PROTEIN UL18M"/>
    <property type="match status" value="1"/>
</dbReference>
<dbReference type="Pfam" id="PF00861">
    <property type="entry name" value="Ribosomal_L18p"/>
    <property type="match status" value="1"/>
</dbReference>
<dbReference type="SUPFAM" id="SSF53137">
    <property type="entry name" value="Translational machinery components"/>
    <property type="match status" value="1"/>
</dbReference>
<reference key="1">
    <citation type="journal article" date="2011" name="J. Bacteriol.">
        <title>Comparative genomics of 28 Salmonella enterica isolates: evidence for CRISPR-mediated adaptive sublineage evolution.</title>
        <authorList>
            <person name="Fricke W.F."/>
            <person name="Mammel M.K."/>
            <person name="McDermott P.F."/>
            <person name="Tartera C."/>
            <person name="White D.G."/>
            <person name="Leclerc J.E."/>
            <person name="Ravel J."/>
            <person name="Cebula T.A."/>
        </authorList>
    </citation>
    <scope>NUCLEOTIDE SEQUENCE [LARGE SCALE GENOMIC DNA]</scope>
    <source>
        <strain>CVM19633</strain>
    </source>
</reference>
<keyword id="KW-0687">Ribonucleoprotein</keyword>
<keyword id="KW-0689">Ribosomal protein</keyword>
<keyword id="KW-0694">RNA-binding</keyword>
<keyword id="KW-0699">rRNA-binding</keyword>
<accession>B4TXC6</accession>
<protein>
    <recommendedName>
        <fullName evidence="1">Large ribosomal subunit protein uL18</fullName>
    </recommendedName>
    <alternativeName>
        <fullName evidence="2">50S ribosomal protein L18</fullName>
    </alternativeName>
</protein>
<gene>
    <name evidence="1" type="primary">rplR</name>
    <name type="ordered locus">SeSA_A3620</name>
</gene>
<proteinExistence type="inferred from homology"/>
<evidence type="ECO:0000255" key="1">
    <source>
        <dbReference type="HAMAP-Rule" id="MF_01337"/>
    </source>
</evidence>
<evidence type="ECO:0000305" key="2"/>
<organism>
    <name type="scientific">Salmonella schwarzengrund (strain CVM19633)</name>
    <dbReference type="NCBI Taxonomy" id="439843"/>
    <lineage>
        <taxon>Bacteria</taxon>
        <taxon>Pseudomonadati</taxon>
        <taxon>Pseudomonadota</taxon>
        <taxon>Gammaproteobacteria</taxon>
        <taxon>Enterobacterales</taxon>
        <taxon>Enterobacteriaceae</taxon>
        <taxon>Salmonella</taxon>
    </lineage>
</organism>
<comment type="function">
    <text evidence="1">This is one of the proteins that bind and probably mediate the attachment of the 5S RNA into the large ribosomal subunit, where it forms part of the central protuberance.</text>
</comment>
<comment type="subunit">
    <text evidence="1">Part of the 50S ribosomal subunit; part of the 5S rRNA/L5/L18/L25 subcomplex. Contacts the 5S and 23S rRNAs.</text>
</comment>
<comment type="similarity">
    <text evidence="1">Belongs to the universal ribosomal protein uL18 family.</text>
</comment>
<sequence length="117" mass="12770">MDKKSARIRRATRARRKLKELGATRLVVHRTPRHIYAQVIAPNGSEVLVAASTVEKAIAEQLKYTGNKDAAAAVGKAVAERALEKGIKDVSFDRSGFQYHGRVQALADAAREAGLQF</sequence>
<feature type="chain" id="PRO_1000142718" description="Large ribosomal subunit protein uL18">
    <location>
        <begin position="1"/>
        <end position="117"/>
    </location>
</feature>
<name>RL18_SALSV</name>